<gene>
    <name evidence="1" type="primary">pyrC</name>
    <name type="ordered locus">PA14_18710</name>
</gene>
<comment type="function">
    <text evidence="1">Catalyzes the reversible cyclization of carbamoyl aspartate to dihydroorotate.</text>
</comment>
<comment type="catalytic activity">
    <reaction evidence="1">
        <text>(S)-dihydroorotate + H2O = N-carbamoyl-L-aspartate + H(+)</text>
        <dbReference type="Rhea" id="RHEA:24296"/>
        <dbReference type="ChEBI" id="CHEBI:15377"/>
        <dbReference type="ChEBI" id="CHEBI:15378"/>
        <dbReference type="ChEBI" id="CHEBI:30864"/>
        <dbReference type="ChEBI" id="CHEBI:32814"/>
        <dbReference type="EC" id="3.5.2.3"/>
    </reaction>
</comment>
<comment type="cofactor">
    <cofactor evidence="1">
        <name>Zn(2+)</name>
        <dbReference type="ChEBI" id="CHEBI:29105"/>
    </cofactor>
    <text evidence="1">Binds 2 Zn(2+) ions per subunit.</text>
</comment>
<comment type="pathway">
    <text evidence="1">Pyrimidine metabolism; UMP biosynthesis via de novo pathway; (S)-dihydroorotate from bicarbonate: step 3/3.</text>
</comment>
<comment type="subunit">
    <text evidence="1">Homodimer.</text>
</comment>
<comment type="similarity">
    <text evidence="1">Belongs to the metallo-dependent hydrolases superfamily. DHOase family. Class II DHOase subfamily.</text>
</comment>
<organism>
    <name type="scientific">Pseudomonas aeruginosa (strain UCBPP-PA14)</name>
    <dbReference type="NCBI Taxonomy" id="208963"/>
    <lineage>
        <taxon>Bacteria</taxon>
        <taxon>Pseudomonadati</taxon>
        <taxon>Pseudomonadota</taxon>
        <taxon>Gammaproteobacteria</taxon>
        <taxon>Pseudomonadales</taxon>
        <taxon>Pseudomonadaceae</taxon>
        <taxon>Pseudomonas</taxon>
    </lineage>
</organism>
<protein>
    <recommendedName>
        <fullName evidence="1">Dihydroorotase</fullName>
        <shortName evidence="1">DHOase</shortName>
        <ecNumber evidence="1">3.5.2.3</ecNumber>
    </recommendedName>
</protein>
<accession>Q02QZ8</accession>
<reference key="1">
    <citation type="journal article" date="2006" name="Genome Biol.">
        <title>Genomic analysis reveals that Pseudomonas aeruginosa virulence is combinatorial.</title>
        <authorList>
            <person name="Lee D.G."/>
            <person name="Urbach J.M."/>
            <person name="Wu G."/>
            <person name="Liberati N.T."/>
            <person name="Feinbaum R.L."/>
            <person name="Miyata S."/>
            <person name="Diggins L.T."/>
            <person name="He J."/>
            <person name="Saucier M."/>
            <person name="Deziel E."/>
            <person name="Friedman L."/>
            <person name="Li L."/>
            <person name="Grills G."/>
            <person name="Montgomery K."/>
            <person name="Kucherlapati R."/>
            <person name="Rahme L.G."/>
            <person name="Ausubel F.M."/>
        </authorList>
    </citation>
    <scope>NUCLEOTIDE SEQUENCE [LARGE SCALE GENOMIC DNA]</scope>
    <source>
        <strain>UCBPP-PA14</strain>
    </source>
</reference>
<feature type="chain" id="PRO_1000024033" description="Dihydroorotase">
    <location>
        <begin position="1"/>
        <end position="348"/>
    </location>
</feature>
<feature type="active site" evidence="1">
    <location>
        <position position="248"/>
    </location>
</feature>
<feature type="binding site" evidence="1">
    <location>
        <position position="14"/>
    </location>
    <ligand>
        <name>Zn(2+)</name>
        <dbReference type="ChEBI" id="CHEBI:29105"/>
        <label>1</label>
    </ligand>
</feature>
<feature type="binding site" evidence="1">
    <location>
        <begin position="16"/>
        <end position="18"/>
    </location>
    <ligand>
        <name>substrate</name>
    </ligand>
</feature>
<feature type="binding site" evidence="1">
    <location>
        <position position="16"/>
    </location>
    <ligand>
        <name>Zn(2+)</name>
        <dbReference type="ChEBI" id="CHEBI:29105"/>
        <label>1</label>
    </ligand>
</feature>
<feature type="binding site" evidence="1">
    <location>
        <position position="42"/>
    </location>
    <ligand>
        <name>substrate</name>
    </ligand>
</feature>
<feature type="binding site" description="via carbamate group" evidence="1">
    <location>
        <position position="100"/>
    </location>
    <ligand>
        <name>Zn(2+)</name>
        <dbReference type="ChEBI" id="CHEBI:29105"/>
        <label>1</label>
    </ligand>
</feature>
<feature type="binding site" description="via carbamate group" evidence="1">
    <location>
        <position position="100"/>
    </location>
    <ligand>
        <name>Zn(2+)</name>
        <dbReference type="ChEBI" id="CHEBI:29105"/>
        <label>2</label>
    </ligand>
</feature>
<feature type="binding site" evidence="1">
    <location>
        <position position="137"/>
    </location>
    <ligand>
        <name>substrate</name>
    </ligand>
</feature>
<feature type="binding site" evidence="1">
    <location>
        <position position="137"/>
    </location>
    <ligand>
        <name>Zn(2+)</name>
        <dbReference type="ChEBI" id="CHEBI:29105"/>
        <label>2</label>
    </ligand>
</feature>
<feature type="binding site" evidence="1">
    <location>
        <position position="175"/>
    </location>
    <ligand>
        <name>Zn(2+)</name>
        <dbReference type="ChEBI" id="CHEBI:29105"/>
        <label>2</label>
    </ligand>
</feature>
<feature type="binding site" evidence="1">
    <location>
        <position position="220"/>
    </location>
    <ligand>
        <name>substrate</name>
    </ligand>
</feature>
<feature type="binding site" evidence="1">
    <location>
        <position position="248"/>
    </location>
    <ligand>
        <name>Zn(2+)</name>
        <dbReference type="ChEBI" id="CHEBI:29105"/>
        <label>1</label>
    </ligand>
</feature>
<feature type="binding site" evidence="1">
    <location>
        <position position="252"/>
    </location>
    <ligand>
        <name>substrate</name>
    </ligand>
</feature>
<feature type="binding site" evidence="1">
    <location>
        <position position="264"/>
    </location>
    <ligand>
        <name>substrate</name>
    </ligand>
</feature>
<feature type="modified residue" description="N6-carboxylysine" evidence="1">
    <location>
        <position position="100"/>
    </location>
</feature>
<sequence length="348" mass="38407">MSDRLTLLRPDDWHIHLRDGAALANTVGDAARTFGRAIVMPNLVPPVRNAAEADAYRQRILAARPAASRFEPLMVLYLTDRTSAEEIRTAKASGFVHAAKLYPAGATTNSDSGVTRIDNIFEALEAMAEVGMPLLVHGEVTRAEVDVFDREKQFIDEHLRRVVERFPTLKVVFEHITTGDAAQFVREAPANVGATITAHHLLYNRNHMLVGGIRPHFYCLPILKRNTHQEALLDAAVSGNPKFFLGTDSAPHARHAKETACGCAGCYSAYAAIELYAEAFEQRNALDKLEGFASLHGPDFYGLPRNTDRITLVREEWQAPASLPFGDFDVVPLRAGETLRWKLLEAGA</sequence>
<keyword id="KW-0378">Hydrolase</keyword>
<keyword id="KW-0479">Metal-binding</keyword>
<keyword id="KW-0665">Pyrimidine biosynthesis</keyword>
<keyword id="KW-0862">Zinc</keyword>
<evidence type="ECO:0000255" key="1">
    <source>
        <dbReference type="HAMAP-Rule" id="MF_00219"/>
    </source>
</evidence>
<name>PYRC_PSEAB</name>
<proteinExistence type="inferred from homology"/>
<dbReference type="EC" id="3.5.2.3" evidence="1"/>
<dbReference type="EMBL" id="CP000438">
    <property type="protein sequence ID" value="ABJ12762.1"/>
    <property type="molecule type" value="Genomic_DNA"/>
</dbReference>
<dbReference type="RefSeq" id="WP_003138114.1">
    <property type="nucleotide sequence ID" value="NZ_CP034244.1"/>
</dbReference>
<dbReference type="SMR" id="Q02QZ8"/>
<dbReference type="MEROPS" id="M38.A02"/>
<dbReference type="KEGG" id="pau:PA14_18710"/>
<dbReference type="PseudoCAP" id="PA14_18710"/>
<dbReference type="HOGENOM" id="CLU_041558_1_0_6"/>
<dbReference type="BioCyc" id="PAER208963:G1G74-1542-MONOMER"/>
<dbReference type="UniPathway" id="UPA00070">
    <property type="reaction ID" value="UER00117"/>
</dbReference>
<dbReference type="Proteomes" id="UP000000653">
    <property type="component" value="Chromosome"/>
</dbReference>
<dbReference type="GO" id="GO:0005829">
    <property type="term" value="C:cytosol"/>
    <property type="evidence" value="ECO:0007669"/>
    <property type="project" value="TreeGrafter"/>
</dbReference>
<dbReference type="GO" id="GO:0004151">
    <property type="term" value="F:dihydroorotase activity"/>
    <property type="evidence" value="ECO:0007669"/>
    <property type="project" value="UniProtKB-UniRule"/>
</dbReference>
<dbReference type="GO" id="GO:0008270">
    <property type="term" value="F:zinc ion binding"/>
    <property type="evidence" value="ECO:0007669"/>
    <property type="project" value="UniProtKB-UniRule"/>
</dbReference>
<dbReference type="GO" id="GO:0006207">
    <property type="term" value="P:'de novo' pyrimidine nucleobase biosynthetic process"/>
    <property type="evidence" value="ECO:0007669"/>
    <property type="project" value="TreeGrafter"/>
</dbReference>
<dbReference type="GO" id="GO:0044205">
    <property type="term" value="P:'de novo' UMP biosynthetic process"/>
    <property type="evidence" value="ECO:0007669"/>
    <property type="project" value="UniProtKB-UniRule"/>
</dbReference>
<dbReference type="CDD" id="cd01294">
    <property type="entry name" value="DHOase"/>
    <property type="match status" value="1"/>
</dbReference>
<dbReference type="FunFam" id="3.20.20.140:FF:000006">
    <property type="entry name" value="Dihydroorotase"/>
    <property type="match status" value="1"/>
</dbReference>
<dbReference type="Gene3D" id="3.20.20.140">
    <property type="entry name" value="Metal-dependent hydrolases"/>
    <property type="match status" value="1"/>
</dbReference>
<dbReference type="HAMAP" id="MF_00219">
    <property type="entry name" value="PyrC_classII"/>
    <property type="match status" value="1"/>
</dbReference>
<dbReference type="InterPro" id="IPR006680">
    <property type="entry name" value="Amidohydro-rel"/>
</dbReference>
<dbReference type="InterPro" id="IPR004721">
    <property type="entry name" value="DHOdimr"/>
</dbReference>
<dbReference type="InterPro" id="IPR002195">
    <property type="entry name" value="Dihydroorotase_CS"/>
</dbReference>
<dbReference type="InterPro" id="IPR032466">
    <property type="entry name" value="Metal_Hydrolase"/>
</dbReference>
<dbReference type="NCBIfam" id="TIGR00856">
    <property type="entry name" value="pyrC_dimer"/>
    <property type="match status" value="1"/>
</dbReference>
<dbReference type="PANTHER" id="PTHR43137">
    <property type="entry name" value="DIHYDROOROTASE"/>
    <property type="match status" value="1"/>
</dbReference>
<dbReference type="PANTHER" id="PTHR43137:SF1">
    <property type="entry name" value="DIHYDROOROTASE"/>
    <property type="match status" value="1"/>
</dbReference>
<dbReference type="Pfam" id="PF01979">
    <property type="entry name" value="Amidohydro_1"/>
    <property type="match status" value="1"/>
</dbReference>
<dbReference type="PIRSF" id="PIRSF001237">
    <property type="entry name" value="DHOdimr"/>
    <property type="match status" value="1"/>
</dbReference>
<dbReference type="SUPFAM" id="SSF51556">
    <property type="entry name" value="Metallo-dependent hydrolases"/>
    <property type="match status" value="1"/>
</dbReference>
<dbReference type="PROSITE" id="PS00482">
    <property type="entry name" value="DIHYDROOROTASE_1"/>
    <property type="match status" value="1"/>
</dbReference>
<dbReference type="PROSITE" id="PS00483">
    <property type="entry name" value="DIHYDROOROTASE_2"/>
    <property type="match status" value="1"/>
</dbReference>